<name>PPGK_MYCTA</name>
<sequence length="265" mass="27429">MTSTGPETSETPGATTQRHGFGIDVGGSGIKGGIVDLDTGQLIGDRIKLLTPQPATPLAVAKTIAEVVNGFGWRGPLGVTYPGVVTHGVVRTAANVDKSWIGTNARDTIGAELGGQQVTILNDADAAGLAETRYGAGKNNPGLVVLLTFGTGIGSAVIHNGTLIPNTEFGHLEVGGKEAEERAASSVKEKNDWTYPKWAKQVIRVLIAIENAIWPDLFIAGGGISRKADKWVPLLENRTPVVPAALQNTAGIVGAAMASVADTTH</sequence>
<protein>
    <recommendedName>
        <fullName evidence="5">Polyphosphate glucokinase</fullName>
        <shortName evidence="5">Poly(P) glucokinase</shortName>
        <ecNumber evidence="3 4">2.7.1.63</ecNumber>
    </recommendedName>
    <alternativeName>
        <fullName evidence="5">ATP-dependent glucokinase</fullName>
        <ecNumber evidence="3 4">2.7.1.2</ecNumber>
    </alternativeName>
    <alternativeName>
        <fullName>Polyphosphate--glucose phosphotransferase</fullName>
    </alternativeName>
</protein>
<evidence type="ECO:0000255" key="1"/>
<evidence type="ECO:0000256" key="2">
    <source>
        <dbReference type="SAM" id="MobiDB-lite"/>
    </source>
</evidence>
<evidence type="ECO:0000269" key="3">
    <source>
    </source>
</evidence>
<evidence type="ECO:0000269" key="4">
    <source>
    </source>
</evidence>
<evidence type="ECO:0000303" key="5">
    <source>
    </source>
</evidence>
<evidence type="ECO:0000305" key="6"/>
<proteinExistence type="evidence at protein level"/>
<feature type="chain" id="PRO_0000306419" description="Polyphosphate glucokinase">
    <location>
        <begin position="1"/>
        <end position="265"/>
    </location>
</feature>
<feature type="region of interest" description="Disordered" evidence="2">
    <location>
        <begin position="1"/>
        <end position="22"/>
    </location>
</feature>
<feature type="compositionally biased region" description="Polar residues" evidence="2">
    <location>
        <begin position="1"/>
        <end position="18"/>
    </location>
</feature>
<feature type="binding site" evidence="1">
    <location>
        <begin position="24"/>
        <end position="29"/>
    </location>
    <ligand>
        <name>ATP</name>
        <dbReference type="ChEBI" id="CHEBI:30616"/>
    </ligand>
</feature>
<feature type="sequence conflict" description="In Ref. 2; AA sequence." evidence="6" ref="2">
    <original>H</original>
    <variation>G</variation>
    <location>
        <position position="19"/>
    </location>
</feature>
<feature type="sequence conflict" description="In Ref. 2; AA sequence." evidence="6" ref="2">
    <original>I</original>
    <variation>V</variation>
    <location>
        <position position="23"/>
    </location>
</feature>
<feature type="sequence conflict" description="In Ref. 2; AA sequence." evidence="6" ref="2">
    <original>T</original>
    <variation>G</variation>
    <location>
        <position position="39"/>
    </location>
</feature>
<feature type="sequence conflict" description="In Ref. 2; AA sequence." evidence="6" ref="2">
    <original>QL</original>
    <variation>EI</variation>
    <location>
        <begin position="41"/>
        <end position="42"/>
    </location>
</feature>
<feature type="sequence conflict" description="In Ref. 2; AA sequence." evidence="6" ref="2">
    <original>I</original>
    <variation>V</variation>
    <location>
        <position position="120"/>
    </location>
</feature>
<feature type="sequence conflict" description="In Ref. 2; AA sequence." evidence="6" ref="2">
    <original>TR</original>
    <variation>EH</variation>
    <location>
        <begin position="132"/>
        <end position="133"/>
    </location>
</feature>
<feature type="sequence conflict" description="In Ref. 2; AA sequence." evidence="6" ref="2">
    <original>EVG</original>
    <variation>QDV</variation>
    <location>
        <begin position="173"/>
        <end position="175"/>
    </location>
</feature>
<gene>
    <name type="primary">ppgK</name>
    <name type="ordered locus">MRA_2730</name>
</gene>
<accession>A5U654</accession>
<comment type="function">
    <text evidence="3 4">Catalyzes the phosphorylation of glucose using polyphosphate or ATP as the phosphoryl donor (PubMed:8381043, PubMed:8703950). Polyphosphate, rather than ATP, seems to be the major phosphate donor for the enzyme in M.tuberculosis (PubMed:8703950). GTP, UTP and CTP can replace ATP as phosphoryl donor (PubMed:8381043).</text>
</comment>
<comment type="catalytic activity">
    <reaction evidence="3 4">
        <text>[phosphate](n) + D-glucose = [phosphate](n-1) + D-glucose 6-phosphate + H(+)</text>
        <dbReference type="Rhea" id="RHEA:22036"/>
        <dbReference type="Rhea" id="RHEA-COMP:9859"/>
        <dbReference type="Rhea" id="RHEA-COMP:14279"/>
        <dbReference type="ChEBI" id="CHEBI:4167"/>
        <dbReference type="ChEBI" id="CHEBI:15378"/>
        <dbReference type="ChEBI" id="CHEBI:16838"/>
        <dbReference type="ChEBI" id="CHEBI:61548"/>
        <dbReference type="EC" id="2.7.1.63"/>
    </reaction>
</comment>
<comment type="catalytic activity">
    <reaction evidence="3 4">
        <text>D-glucose + ATP = D-glucose 6-phosphate + ADP + H(+)</text>
        <dbReference type="Rhea" id="RHEA:17825"/>
        <dbReference type="ChEBI" id="CHEBI:4167"/>
        <dbReference type="ChEBI" id="CHEBI:15378"/>
        <dbReference type="ChEBI" id="CHEBI:30616"/>
        <dbReference type="ChEBI" id="CHEBI:61548"/>
        <dbReference type="ChEBI" id="CHEBI:456216"/>
        <dbReference type="EC" id="2.7.1.2"/>
    </reaction>
</comment>
<comment type="biophysicochemical properties">
    <kinetics>
        <KM evidence="3">18.4 uM for (Phosphate)(32) (at pH 8.6)</KM>
        <KM evidence="4">13.9 uM for polyphosphate type 35 (Sigma) (at pH 7.5)</KM>
        <KM evidence="4">6.1 uM for polyphosphate type 35 (Sigma) (at pH 8.6)</KM>
        <KM evidence="4">0.28 mM for D-glucose (at pH 7.5, in the polyphosphate-dependent glucokinase reaction)</KM>
        <KM evidence="4">0.37 mM for D-glucose (at pH 8.6, in the polyphosphate-dependent glucokinase reaction)</KM>
        <KM evidence="4">0.06 mM for D-glucose (at pH 7.5, in the ATP-dependent glucokinase reaction)</KM>
        <KM evidence="4">0.22 mM for D-glucose (at pH 8.6, in the ATP-dependent glucokinase reaction)</KM>
        <KM evidence="4">0.88 mM for ATP (at pH 7.5)</KM>
        <KM evidence="4">1.4 mM for ATP (at pH 8.6)</KM>
        <KM evidence="3">1.46 mM for ATP (at pH 8.6)</KM>
        <KM evidence="3">0.29 mM for GTP (at pH 8.6)</KM>
        <KM evidence="3">1.43 mM for dATP (at pH 8.6)</KM>
        <KM evidence="3">2.19 mM for UTP (at pH 8.6)</KM>
        <KM evidence="3">8.32 mM for CTP (at pH 8.6)</KM>
        <text evidence="3 4">kcat is 199 sec(-1) with polyphosphate type 35 (Sigma) as substrate at pH 7.5. kcat is 208 sec(-1) with polyphosphate type 35 (Sigma) as substrate at pH 8.6. kcat is 108 sec(-1) with ATP as substrate at pH 7.5. kcat is 116 sec(-1) with ATP as substrate at pH 8.6 (PubMed:8703950). kcat is 149 sec(-1) with poly(P)(32) as substrate at pH 8.6. kcat is 60 sec(-1) with ATP as substrate at pH 8.6. kcat is 60 sec(-1) with GTP as substrate at pH 8.6. kcat is 61 sec(-1) with dATP as substrate at pH 8.6. kcat is 37 sec(-1) with UTP as substrate at pH 8.6. kcat is 19 sec(-1) with CTP as substrate at pH 8.6 (PubMed:8381043).</text>
    </kinetics>
    <phDependence>
        <text evidence="3">Optimum pH is 9.5 and 9.6-9.5 with poly(P)(32) and ATP as the phosphoryl donors, respectively.</text>
    </phDependence>
    <temperatureDependence>
        <text evidence="3">Optimum temperature is 50 degrees Celsius for both activities.</text>
    </temperatureDependence>
</comment>
<comment type="subunit">
    <text evidence="3">Homodimer.</text>
</comment>
<comment type="miscellaneous">
    <text evidence="4">The poly(P)- and ATP-dependent glucokinase reactions both follow an ordered Bi-Bi mechanism, with glucose being the second substrate to bind and glucose 6-phosphate being released last. The mechanism of poly(P) utilization is not strictly processive and is most likely nonprocessive, where there is dissociation of poly(P) prior to complete utilization.</text>
</comment>
<comment type="similarity">
    <text evidence="6">Belongs to the ROK (NagC/XylR) family.</text>
</comment>
<reference key="1">
    <citation type="journal article" date="2008" name="PLoS ONE">
        <title>Genetic basis of virulence attenuation revealed by comparative genomic analysis of Mycobacterium tuberculosis strain H37Ra versus H37Rv.</title>
        <authorList>
            <person name="Zheng H."/>
            <person name="Lu L."/>
            <person name="Wang B."/>
            <person name="Pu S."/>
            <person name="Zhang X."/>
            <person name="Zhu G."/>
            <person name="Shi W."/>
            <person name="Zhang L."/>
            <person name="Wang H."/>
            <person name="Wang S."/>
            <person name="Zhao G."/>
            <person name="Zhang Y."/>
        </authorList>
    </citation>
    <scope>NUCLEOTIDE SEQUENCE [LARGE SCALE GENOMIC DNA]</scope>
    <source>
        <strain>ATCC 25177 / H37Ra</strain>
    </source>
</reference>
<reference key="2">
    <citation type="journal article" date="1996" name="J. Biol. Chem.">
        <title>Cloning, expression, and characterization of polyphosphate glucokinase from Mycobacterium tuberculosis.</title>
        <authorList>
            <person name="Hsieh P.-C."/>
            <person name="Shenoy B.C."/>
            <person name="Samols D."/>
            <person name="Phillips N.F.B."/>
        </authorList>
    </citation>
    <scope>PROTEIN SEQUENCE OF 19-42; 120-138 AND 169-178</scope>
    <source>
        <strain>ATCC 25177 / H37Ra</strain>
    </source>
</reference>
<reference key="3">
    <citation type="journal article" date="1993" name="Protein Expr. Purif.">
        <title>Purification of polyphosphate and ATP glucose phosphotransferase from Mycobacterium tuberculosis H37Ra: evidence that poly(P) and ATP glucokinase activities are catalyzed by the same enzyme.</title>
        <authorList>
            <person name="Hsieh P.C."/>
            <person name="Shenoy B.C."/>
            <person name="Jentoft J.E."/>
            <person name="Phillips N.F."/>
        </authorList>
    </citation>
    <scope>FUNCTION</scope>
    <scope>CATALYTIC ACTIVITY</scope>
    <scope>BIOPHYSICOCHEMICAL PROPERTIES</scope>
    <scope>SUBUNIT</scope>
    <source>
        <strain>ATCC 25177 / H37Ra</strain>
    </source>
</reference>
<reference key="4">
    <citation type="journal article" date="1996" name="Biochemistry">
        <title>Kinetic mechanisms of polyphosphate glucokinase from Mycobacterium tuberculosis.</title>
        <authorList>
            <person name="Hsieh P.C."/>
            <person name="Kowalczyk T.H."/>
            <person name="Phillips N.F."/>
        </authorList>
    </citation>
    <scope>FUNCTION</scope>
    <scope>CATALYTIC ACTIVITY</scope>
    <scope>BIOPHYSICOCHEMICAL PROPERTIES</scope>
    <scope>REACTION MECHANISM</scope>
    <source>
        <strain>ATCC 25177 / H37Ra</strain>
    </source>
</reference>
<dbReference type="EC" id="2.7.1.63" evidence="3 4"/>
<dbReference type="EC" id="2.7.1.2" evidence="3 4"/>
<dbReference type="EMBL" id="CP000611">
    <property type="protein sequence ID" value="ABQ74504.1"/>
    <property type="molecule type" value="Genomic_DNA"/>
</dbReference>
<dbReference type="RefSeq" id="WP_003911949.1">
    <property type="nucleotide sequence ID" value="NZ_CP016972.1"/>
</dbReference>
<dbReference type="SMR" id="A5U654"/>
<dbReference type="KEGG" id="mra:MRA_2730"/>
<dbReference type="eggNOG" id="COG1940">
    <property type="taxonomic scope" value="Bacteria"/>
</dbReference>
<dbReference type="HOGENOM" id="CLU_065796_0_0_11"/>
<dbReference type="SABIO-RK" id="A5U654"/>
<dbReference type="Proteomes" id="UP000001988">
    <property type="component" value="Chromosome"/>
</dbReference>
<dbReference type="GO" id="GO:0005524">
    <property type="term" value="F:ATP binding"/>
    <property type="evidence" value="ECO:0007669"/>
    <property type="project" value="UniProtKB-KW"/>
</dbReference>
<dbReference type="GO" id="GO:0004340">
    <property type="term" value="F:glucokinase activity"/>
    <property type="evidence" value="ECO:0007669"/>
    <property type="project" value="UniProtKB-EC"/>
</dbReference>
<dbReference type="GO" id="GO:0047330">
    <property type="term" value="F:polyphosphate-glucose phosphotransferase activity"/>
    <property type="evidence" value="ECO:0007669"/>
    <property type="project" value="UniProtKB-EC"/>
</dbReference>
<dbReference type="CDD" id="cd24058">
    <property type="entry name" value="ASKHA_NBD_ROK_PPGK"/>
    <property type="match status" value="1"/>
</dbReference>
<dbReference type="FunFam" id="3.30.420.40:FF:000412">
    <property type="entry name" value="Polyphosphate glucokinase"/>
    <property type="match status" value="1"/>
</dbReference>
<dbReference type="FunFam" id="3.30.420.40:FF:000443">
    <property type="entry name" value="Polyphosphate glucokinase"/>
    <property type="match status" value="1"/>
</dbReference>
<dbReference type="Gene3D" id="3.30.420.40">
    <property type="match status" value="2"/>
</dbReference>
<dbReference type="InterPro" id="IPR043129">
    <property type="entry name" value="ATPase_NBD"/>
</dbReference>
<dbReference type="InterPro" id="IPR000600">
    <property type="entry name" value="ROK"/>
</dbReference>
<dbReference type="NCBIfam" id="NF045942">
    <property type="entry name" value="PolPhglucPhase"/>
    <property type="match status" value="1"/>
</dbReference>
<dbReference type="PANTHER" id="PTHR18964:SF146">
    <property type="entry name" value="POLYPHOSPHATE GLUCOKINASE"/>
    <property type="match status" value="1"/>
</dbReference>
<dbReference type="PANTHER" id="PTHR18964">
    <property type="entry name" value="ROK (REPRESSOR, ORF, KINASE) FAMILY"/>
    <property type="match status" value="1"/>
</dbReference>
<dbReference type="Pfam" id="PF00480">
    <property type="entry name" value="ROK"/>
    <property type="match status" value="1"/>
</dbReference>
<dbReference type="SUPFAM" id="SSF53067">
    <property type="entry name" value="Actin-like ATPase domain"/>
    <property type="match status" value="1"/>
</dbReference>
<organism>
    <name type="scientific">Mycobacterium tuberculosis (strain ATCC 25177 / H37Ra)</name>
    <dbReference type="NCBI Taxonomy" id="419947"/>
    <lineage>
        <taxon>Bacteria</taxon>
        <taxon>Bacillati</taxon>
        <taxon>Actinomycetota</taxon>
        <taxon>Actinomycetes</taxon>
        <taxon>Mycobacteriales</taxon>
        <taxon>Mycobacteriaceae</taxon>
        <taxon>Mycobacterium</taxon>
        <taxon>Mycobacterium tuberculosis complex</taxon>
    </lineage>
</organism>
<keyword id="KW-0067">ATP-binding</keyword>
<keyword id="KW-0903">Direct protein sequencing</keyword>
<keyword id="KW-0418">Kinase</keyword>
<keyword id="KW-0547">Nucleotide-binding</keyword>
<keyword id="KW-1185">Reference proteome</keyword>
<keyword id="KW-0808">Transferase</keyword>